<feature type="chain" id="PRO_0000269651" description="Zinc finger transcription factor YRR1">
    <location>
        <begin position="1"/>
        <end position="810"/>
    </location>
</feature>
<feature type="DNA-binding region" description="Zn(2)-C6 fungal-type" evidence="1">
    <location>
        <begin position="54"/>
        <end position="82"/>
    </location>
</feature>
<feature type="region of interest" description="Disordered" evidence="2">
    <location>
        <begin position="1"/>
        <end position="47"/>
    </location>
</feature>
<feature type="region of interest" description="Disordered" evidence="2">
    <location>
        <begin position="722"/>
        <end position="742"/>
    </location>
</feature>
<feature type="compositionally biased region" description="Polar residues" evidence="2">
    <location>
        <begin position="12"/>
        <end position="22"/>
    </location>
</feature>
<feature type="compositionally biased region" description="Low complexity" evidence="2">
    <location>
        <begin position="23"/>
        <end position="43"/>
    </location>
</feature>
<comment type="function">
    <text evidence="3 4 5 7 8">Transcription factor involved in the regulation of multidrug resistance genes. Acts in concert with YRR1.</text>
</comment>
<comment type="subcellular location">
    <subcellularLocation>
        <location evidence="6">Cytoplasm</location>
    </subcellularLocation>
    <subcellularLocation>
        <location evidence="1 6">Nucleus</location>
    </subcellularLocation>
</comment>
<name>YRR1_YEAST</name>
<gene>
    <name type="primary">YRR1</name>
    <name type="synonym">PDR2</name>
    <name type="ordered locus">YOR162C</name>
    <name type="ORF">O3571</name>
</gene>
<protein>
    <recommendedName>
        <fullName>Zinc finger transcription factor YRR1</fullName>
    </recommendedName>
    <alternativeName>
        <fullName>Pleiotropic drug-resistance protein 2</fullName>
    </alternativeName>
</protein>
<proteinExistence type="evidence at protein level"/>
<dbReference type="EMBL" id="U55021">
    <property type="protein sequence ID" value="AAB47409.1"/>
    <property type="molecule type" value="Genomic_DNA"/>
</dbReference>
<dbReference type="EMBL" id="Z75070">
    <property type="protein sequence ID" value="CAA99368.1"/>
    <property type="molecule type" value="Genomic_DNA"/>
</dbReference>
<dbReference type="EMBL" id="AY692760">
    <property type="protein sequence ID" value="AAT92779.1"/>
    <property type="molecule type" value="Genomic_DNA"/>
</dbReference>
<dbReference type="EMBL" id="BK006948">
    <property type="protein sequence ID" value="DAA10936.1"/>
    <property type="molecule type" value="Genomic_DNA"/>
</dbReference>
<dbReference type="PIR" id="S67050">
    <property type="entry name" value="S67050"/>
</dbReference>
<dbReference type="RefSeq" id="NP_014805.3">
    <property type="nucleotide sequence ID" value="NM_001183581.3"/>
</dbReference>
<dbReference type="SMR" id="Q12172"/>
<dbReference type="BioGRID" id="34558">
    <property type="interactions" value="43"/>
</dbReference>
<dbReference type="DIP" id="DIP-5493N"/>
<dbReference type="FunCoup" id="Q12172">
    <property type="interactions" value="1995"/>
</dbReference>
<dbReference type="IntAct" id="Q12172">
    <property type="interactions" value="5"/>
</dbReference>
<dbReference type="MINT" id="Q12172"/>
<dbReference type="STRING" id="4932.YOR162C"/>
<dbReference type="GlyGen" id="Q12172">
    <property type="glycosylation" value="1 site"/>
</dbReference>
<dbReference type="iPTMnet" id="Q12172"/>
<dbReference type="PaxDb" id="4932-YOR162C"/>
<dbReference type="PeptideAtlas" id="Q12172"/>
<dbReference type="EnsemblFungi" id="YOR162C_mRNA">
    <property type="protein sequence ID" value="YOR162C"/>
    <property type="gene ID" value="YOR162C"/>
</dbReference>
<dbReference type="GeneID" id="854333"/>
<dbReference type="KEGG" id="sce:YOR162C"/>
<dbReference type="AGR" id="SGD:S000005688"/>
<dbReference type="SGD" id="S000005688">
    <property type="gene designation" value="YRR1"/>
</dbReference>
<dbReference type="VEuPathDB" id="FungiDB:YOR162C"/>
<dbReference type="eggNOG" id="ENOG502SJDI">
    <property type="taxonomic scope" value="Eukaryota"/>
</dbReference>
<dbReference type="GeneTree" id="ENSGT00940000176356"/>
<dbReference type="HOGENOM" id="CLU_010594_0_0_1"/>
<dbReference type="InParanoid" id="Q12172"/>
<dbReference type="OMA" id="YNSGWEE"/>
<dbReference type="OrthoDB" id="4356994at2759"/>
<dbReference type="BioCyc" id="YEAST:G3O-33679-MONOMER"/>
<dbReference type="BioGRID-ORCS" id="854333">
    <property type="hits" value="5 hits in 13 CRISPR screens"/>
</dbReference>
<dbReference type="PRO" id="PR:Q12172"/>
<dbReference type="Proteomes" id="UP000002311">
    <property type="component" value="Chromosome XV"/>
</dbReference>
<dbReference type="RNAct" id="Q12172">
    <property type="molecule type" value="protein"/>
</dbReference>
<dbReference type="GO" id="GO:0005737">
    <property type="term" value="C:cytoplasm"/>
    <property type="evidence" value="ECO:0007005"/>
    <property type="project" value="SGD"/>
</dbReference>
<dbReference type="GO" id="GO:0005634">
    <property type="term" value="C:nucleus"/>
    <property type="evidence" value="ECO:0007005"/>
    <property type="project" value="SGD"/>
</dbReference>
<dbReference type="GO" id="GO:0000981">
    <property type="term" value="F:DNA-binding transcription factor activity, RNA polymerase II-specific"/>
    <property type="evidence" value="ECO:0000314"/>
    <property type="project" value="SGD"/>
</dbReference>
<dbReference type="GO" id="GO:0000978">
    <property type="term" value="F:RNA polymerase II cis-regulatory region sequence-specific DNA binding"/>
    <property type="evidence" value="ECO:0000314"/>
    <property type="project" value="SGD"/>
</dbReference>
<dbReference type="GO" id="GO:0043565">
    <property type="term" value="F:sequence-specific DNA binding"/>
    <property type="evidence" value="ECO:0007005"/>
    <property type="project" value="SGD"/>
</dbReference>
<dbReference type="GO" id="GO:0008270">
    <property type="term" value="F:zinc ion binding"/>
    <property type="evidence" value="ECO:0007669"/>
    <property type="project" value="InterPro"/>
</dbReference>
<dbReference type="GO" id="GO:0034599">
    <property type="term" value="P:cellular response to oxidative stress"/>
    <property type="evidence" value="ECO:0000314"/>
    <property type="project" value="SGD"/>
</dbReference>
<dbReference type="GO" id="GO:0045944">
    <property type="term" value="P:positive regulation of transcription by RNA polymerase II"/>
    <property type="evidence" value="ECO:0000314"/>
    <property type="project" value="SGD"/>
</dbReference>
<dbReference type="GO" id="GO:0006357">
    <property type="term" value="P:regulation of transcription by RNA polymerase II"/>
    <property type="evidence" value="ECO:0000314"/>
    <property type="project" value="SGD"/>
</dbReference>
<dbReference type="CDD" id="cd00067">
    <property type="entry name" value="GAL4"/>
    <property type="match status" value="1"/>
</dbReference>
<dbReference type="FunFam" id="4.10.240.10:FF:000029">
    <property type="entry name" value="Transcription factor"/>
    <property type="match status" value="1"/>
</dbReference>
<dbReference type="Gene3D" id="4.10.240.10">
    <property type="entry name" value="Zn(2)-C6 fungal-type DNA-binding domain"/>
    <property type="match status" value="1"/>
</dbReference>
<dbReference type="InterPro" id="IPR052693">
    <property type="entry name" value="Yeast_MDR_Regulatory"/>
</dbReference>
<dbReference type="InterPro" id="IPR036864">
    <property type="entry name" value="Zn2-C6_fun-type_DNA-bd_sf"/>
</dbReference>
<dbReference type="InterPro" id="IPR001138">
    <property type="entry name" value="Zn2Cys6_DnaBD"/>
</dbReference>
<dbReference type="PANTHER" id="PTHR31405">
    <property type="entry name" value="TRANSCRIPTION FACTOR PDR8-RELATED"/>
    <property type="match status" value="1"/>
</dbReference>
<dbReference type="PANTHER" id="PTHR31405:SF8">
    <property type="entry name" value="TRANSCRIPTION FACTOR PDR8-RELATED"/>
    <property type="match status" value="1"/>
</dbReference>
<dbReference type="Pfam" id="PF00172">
    <property type="entry name" value="Zn_clus"/>
    <property type="match status" value="1"/>
</dbReference>
<dbReference type="SMART" id="SM00066">
    <property type="entry name" value="GAL4"/>
    <property type="match status" value="1"/>
</dbReference>
<dbReference type="SUPFAM" id="SSF57701">
    <property type="entry name" value="Zn2/Cys6 DNA-binding domain"/>
    <property type="match status" value="1"/>
</dbReference>
<dbReference type="PROSITE" id="PS00463">
    <property type="entry name" value="ZN2_CY6_FUNGAL_1"/>
    <property type="match status" value="1"/>
</dbReference>
<dbReference type="PROSITE" id="PS50048">
    <property type="entry name" value="ZN2_CY6_FUNGAL_2"/>
    <property type="match status" value="1"/>
</dbReference>
<keyword id="KW-0010">Activator</keyword>
<keyword id="KW-0963">Cytoplasm</keyword>
<keyword id="KW-0238">DNA-binding</keyword>
<keyword id="KW-0479">Metal-binding</keyword>
<keyword id="KW-0539">Nucleus</keyword>
<keyword id="KW-1185">Reference proteome</keyword>
<keyword id="KW-0804">Transcription</keyword>
<keyword id="KW-0805">Transcription regulation</keyword>
<keyword id="KW-0862">Zinc</keyword>
<sequence length="810" mass="92468">MKRRSDALLGSFQATNVTPPSDNSNSTAGGANGSNSGTPTSTSGKKRNKLIKSCGFCRRRKLRCDQQKPMCSTCISRNLTTCQYAEEFNKNIEKKATYGPYPNADLLKKVEELENKIRILEAEKNTNSSASSMYTSPNFPPLGTSVGRGSTETSSPLPDGVINPYADRYYLQSKHSGRSTLYGPTSMRTQIANSNWGFIEKYKQLWAKVKVERNKWKQNNQKTMCRELGLLDESDWQPDPLIKQICRFLPSYNKALSILDDFFNDGACNEINVILDKAKVRRDFLDYFMPEKEVKAEGDRSIVYILSNPKKNYYKAAVILLILCLKYFHTDVPTPIEKFFTLLKGASTAKVFYIERAQMLILFYYHRETYSFGGDGSDLVNINECLVTTVTTIGLHLNIRETFKEHEVFMGSIESLENVWLMAIFIDYNISCNVGRPLLINKFYLDENQDHCILNSKSKTYEGKLKRYLKLTRPMLLTLYDRDKFPDLKAYSKRIINFVEEELGPLGHYTGENISEEVPLRESRILSMAVGLLLSFYALIHSVLKVRNIESKNNTFQLVLINFSIIVNTTIRCYRIDKALYPEKFEASNPHLPPHMALSMSLTAGLFSKTLVFFCSLIYFKLTLFENGLCLSNDMEVGWSDLTKLTVPLDKDLSLGTAMSLYSSIFDRLFTVGNKELIRTMHRSSQFVIELAIERTYRTILGNVIEFRKLTEETWLAQIKQELDPQSDNPSSEAKIVSDRQRDLSLAVPTPTPSIIPMLPSPGETKNHAKSQSEIIQMLTDEFWANYNSGWEELINQSEFSTLFDDYKDN</sequence>
<reference key="1">
    <citation type="journal article" date="1996" name="Yeast">
        <title>Analysis of a 22,956 bp region on the right arm of Saccharomyces cerevisiae chromosome XV.</title>
        <authorList>
            <person name="Madania A."/>
            <person name="Poch O."/>
            <person name="Tarassov I.A."/>
            <person name="Winsor B."/>
            <person name="Martin R.P."/>
        </authorList>
    </citation>
    <scope>NUCLEOTIDE SEQUENCE [GENOMIC DNA]</scope>
    <source>
        <strain>ATCC 96604 / S288c / FY1679</strain>
    </source>
</reference>
<reference key="2">
    <citation type="journal article" date="1997" name="Nature">
        <title>The nucleotide sequence of Saccharomyces cerevisiae chromosome XV.</title>
        <authorList>
            <person name="Dujon B."/>
            <person name="Albermann K."/>
            <person name="Aldea M."/>
            <person name="Alexandraki D."/>
            <person name="Ansorge W."/>
            <person name="Arino J."/>
            <person name="Benes V."/>
            <person name="Bohn C."/>
            <person name="Bolotin-Fukuhara M."/>
            <person name="Bordonne R."/>
            <person name="Boyer J."/>
            <person name="Camasses A."/>
            <person name="Casamayor A."/>
            <person name="Casas C."/>
            <person name="Cheret G."/>
            <person name="Cziepluch C."/>
            <person name="Daignan-Fornier B."/>
            <person name="Dang V.-D."/>
            <person name="de Haan M."/>
            <person name="Delius H."/>
            <person name="Durand P."/>
            <person name="Fairhead C."/>
            <person name="Feldmann H."/>
            <person name="Gaillon L."/>
            <person name="Galisson F."/>
            <person name="Gamo F.-J."/>
            <person name="Gancedo C."/>
            <person name="Goffeau A."/>
            <person name="Goulding S.E."/>
            <person name="Grivell L.A."/>
            <person name="Habbig B."/>
            <person name="Hand N.J."/>
            <person name="Hani J."/>
            <person name="Hattenhorst U."/>
            <person name="Hebling U."/>
            <person name="Hernando Y."/>
            <person name="Herrero E."/>
            <person name="Heumann K."/>
            <person name="Hiesel R."/>
            <person name="Hilger F."/>
            <person name="Hofmann B."/>
            <person name="Hollenberg C.P."/>
            <person name="Hughes B."/>
            <person name="Jauniaux J.-C."/>
            <person name="Kalogeropoulos A."/>
            <person name="Katsoulou C."/>
            <person name="Kordes E."/>
            <person name="Lafuente M.J."/>
            <person name="Landt O."/>
            <person name="Louis E.J."/>
            <person name="Maarse A.C."/>
            <person name="Madania A."/>
            <person name="Mannhaupt G."/>
            <person name="Marck C."/>
            <person name="Martin R.P."/>
            <person name="Mewes H.-W."/>
            <person name="Michaux G."/>
            <person name="Paces V."/>
            <person name="Parle-McDermott A.G."/>
            <person name="Pearson B.M."/>
            <person name="Perrin A."/>
            <person name="Pettersson B."/>
            <person name="Poch O."/>
            <person name="Pohl T.M."/>
            <person name="Poirey R."/>
            <person name="Portetelle D."/>
            <person name="Pujol A."/>
            <person name="Purnelle B."/>
            <person name="Ramezani Rad M."/>
            <person name="Rechmann S."/>
            <person name="Schwager C."/>
            <person name="Schweizer M."/>
            <person name="Sor F."/>
            <person name="Sterky F."/>
            <person name="Tarassov I.A."/>
            <person name="Teodoru C."/>
            <person name="Tettelin H."/>
            <person name="Thierry A."/>
            <person name="Tobiasch E."/>
            <person name="Tzermia M."/>
            <person name="Uhlen M."/>
            <person name="Unseld M."/>
            <person name="Valens M."/>
            <person name="Vandenbol M."/>
            <person name="Vetter I."/>
            <person name="Vlcek C."/>
            <person name="Voet M."/>
            <person name="Volckaert G."/>
            <person name="Voss H."/>
            <person name="Wambutt R."/>
            <person name="Wedler H."/>
            <person name="Wiemann S."/>
            <person name="Winsor B."/>
            <person name="Wolfe K.H."/>
            <person name="Zollner A."/>
            <person name="Zumstein E."/>
            <person name="Kleine K."/>
        </authorList>
    </citation>
    <scope>NUCLEOTIDE SEQUENCE [LARGE SCALE GENOMIC DNA]</scope>
    <source>
        <strain>ATCC 204508 / S288c</strain>
    </source>
</reference>
<reference key="3">
    <citation type="journal article" date="2014" name="G3 (Bethesda)">
        <title>The reference genome sequence of Saccharomyces cerevisiae: Then and now.</title>
        <authorList>
            <person name="Engel S.R."/>
            <person name="Dietrich F.S."/>
            <person name="Fisk D.G."/>
            <person name="Binkley G."/>
            <person name="Balakrishnan R."/>
            <person name="Costanzo M.C."/>
            <person name="Dwight S.S."/>
            <person name="Hitz B.C."/>
            <person name="Karra K."/>
            <person name="Nash R.S."/>
            <person name="Weng S."/>
            <person name="Wong E.D."/>
            <person name="Lloyd P."/>
            <person name="Skrzypek M.S."/>
            <person name="Miyasato S.R."/>
            <person name="Simison M."/>
            <person name="Cherry J.M."/>
        </authorList>
    </citation>
    <scope>GENOME REANNOTATION</scope>
    <source>
        <strain>ATCC 204508 / S288c</strain>
    </source>
</reference>
<reference key="4">
    <citation type="journal article" date="2007" name="Genome Res.">
        <title>Approaching a complete repository of sequence-verified protein-encoding clones for Saccharomyces cerevisiae.</title>
        <authorList>
            <person name="Hu Y."/>
            <person name="Rolfs A."/>
            <person name="Bhullar B."/>
            <person name="Murthy T.V.S."/>
            <person name="Zhu C."/>
            <person name="Berger M.F."/>
            <person name="Camargo A.A."/>
            <person name="Kelley F."/>
            <person name="McCarron S."/>
            <person name="Jepson D."/>
            <person name="Richardson A."/>
            <person name="Raphael J."/>
            <person name="Moreira D."/>
            <person name="Taycher E."/>
            <person name="Zuo D."/>
            <person name="Mohr S."/>
            <person name="Kane M.F."/>
            <person name="Williamson J."/>
            <person name="Simpson A.J.G."/>
            <person name="Bulyk M.L."/>
            <person name="Harlow E."/>
            <person name="Marsischky G."/>
            <person name="Kolodner R.D."/>
            <person name="LaBaer J."/>
        </authorList>
    </citation>
    <scope>NUCLEOTIDE SEQUENCE [GENOMIC DNA]</scope>
    <source>
        <strain>ATCC 204508 / S288c</strain>
    </source>
</reference>
<reference key="5">
    <citation type="journal article" date="1998" name="Mol. Microbiol.">
        <title>Yeast gene YRR1, which is required for resistance to 4-nitroquinoline N-oxide, mediates transcriptional activation of the multidrug resistance transporter gene SNQ2.</title>
        <authorList>
            <person name="Cui Z."/>
            <person name="Shiraki T."/>
            <person name="Hirata D."/>
            <person name="Miyakawa T."/>
        </authorList>
    </citation>
    <scope>FUNCTION</scope>
</reference>
<reference key="6">
    <citation type="journal article" date="1999" name="Biosci. Biotechnol. Biochem.">
        <title>Functional analysis of the promoter of the yeast SNQ2 gene encoding a multidrug resistance transporter that confers the resistance to 4-nitroquinoline N-oxide.</title>
        <authorList>
            <person name="Cui Z."/>
            <person name="Hirata D."/>
            <person name="Miyakawa T."/>
        </authorList>
    </citation>
    <scope>FUNCTION</scope>
</reference>
<reference key="7">
    <citation type="journal article" date="2002" name="Mol. Cell. Biol.">
        <title>New insights into the pleiotropic drug resistance network from genome-wide characterization of the YRR1 transcription factor regulation system.</title>
        <authorList>
            <person name="Le Crom S."/>
            <person name="Devaux F."/>
            <person name="Marc P."/>
            <person name="Zhang X."/>
            <person name="Moye-Rowley W.S."/>
            <person name="Jacq C."/>
        </authorList>
    </citation>
    <scope>FUNCTION</scope>
</reference>
<reference key="8">
    <citation type="journal article" date="2003" name="J. Biol. Chem.">
        <title>Competitive promoter occupancy by two yeast paralogous transcription factors controlling the multidrug resistance phenomenon.</title>
        <authorList>
            <person name="Lucau-Danila A."/>
            <person name="Delaveau T."/>
            <person name="Lelandais G."/>
            <person name="Devaux F."/>
            <person name="Jacq C."/>
        </authorList>
    </citation>
    <scope>FUNCTION</scope>
</reference>
<reference key="9">
    <citation type="journal article" date="2003" name="Nature">
        <title>Global analysis of protein localization in budding yeast.</title>
        <authorList>
            <person name="Huh W.-K."/>
            <person name="Falvo J.V."/>
            <person name="Gerke L.C."/>
            <person name="Carroll A.S."/>
            <person name="Howson R.W."/>
            <person name="Weissman J.S."/>
            <person name="O'Shea E.K."/>
        </authorList>
    </citation>
    <scope>SUBCELLULAR LOCATION [LARGE SCALE ANALYSIS]</scope>
</reference>
<reference key="10">
    <citation type="journal article" date="2004" name="Gene">
        <title>Analysis of gene network regulating yeast multidrug resistance by artificial activation of transcription factors: involvement of Pdr3 in salt tolerance.</title>
        <authorList>
            <person name="Onda M."/>
            <person name="Ota K."/>
            <person name="Chiba T."/>
            <person name="Sakaki Y."/>
            <person name="Ito T."/>
        </authorList>
    </citation>
    <scope>FUNCTION</scope>
</reference>
<reference key="11">
    <citation type="journal article" date="2008" name="Mol. Cell. Proteomics">
        <title>A multidimensional chromatography technology for in-depth phosphoproteome analysis.</title>
        <authorList>
            <person name="Albuquerque C.P."/>
            <person name="Smolka M.B."/>
            <person name="Payne S.H."/>
            <person name="Bafna V."/>
            <person name="Eng J."/>
            <person name="Zhou H."/>
        </authorList>
    </citation>
    <scope>IDENTIFICATION BY MASS SPECTROMETRY [LARGE SCALE ANALYSIS]</scope>
</reference>
<organism>
    <name type="scientific">Saccharomyces cerevisiae (strain ATCC 204508 / S288c)</name>
    <name type="common">Baker's yeast</name>
    <dbReference type="NCBI Taxonomy" id="559292"/>
    <lineage>
        <taxon>Eukaryota</taxon>
        <taxon>Fungi</taxon>
        <taxon>Dikarya</taxon>
        <taxon>Ascomycota</taxon>
        <taxon>Saccharomycotina</taxon>
        <taxon>Saccharomycetes</taxon>
        <taxon>Saccharomycetales</taxon>
        <taxon>Saccharomycetaceae</taxon>
        <taxon>Saccharomyces</taxon>
    </lineage>
</organism>
<evidence type="ECO:0000255" key="1">
    <source>
        <dbReference type="PROSITE-ProRule" id="PRU00227"/>
    </source>
</evidence>
<evidence type="ECO:0000256" key="2">
    <source>
        <dbReference type="SAM" id="MobiDB-lite"/>
    </source>
</evidence>
<evidence type="ECO:0000269" key="3">
    <source>
    </source>
</evidence>
<evidence type="ECO:0000269" key="4">
    <source>
    </source>
</evidence>
<evidence type="ECO:0000269" key="5">
    <source>
    </source>
</evidence>
<evidence type="ECO:0000269" key="6">
    <source>
    </source>
</evidence>
<evidence type="ECO:0000269" key="7">
    <source>
    </source>
</evidence>
<evidence type="ECO:0000269" key="8">
    <source>
    </source>
</evidence>
<accession>Q12172</accession>
<accession>D6W2M0</accession>